<evidence type="ECO:0000255" key="1">
    <source>
        <dbReference type="HAMAP-Rule" id="MF_01416"/>
    </source>
</evidence>
<sequence length="178" mass="18961">MINTNTLARPYAKAAFEFASAAQQADAWLNMLSLSAAAVQTPAVAQQLVNPALTDEQKVNVLAQICAGHIDASFSNFLRSLGSNDRLSLLPVVREQFAVLKAEAERALDVEVESAFELNAEQLQTLAAALSKRLDRTVQPKPVVNPALIGGVVIRAGDLVIDGSVRGKLNKLAEALKS</sequence>
<feature type="chain" id="PRO_0000371073" description="ATP synthase subunit delta">
    <location>
        <begin position="1"/>
        <end position="178"/>
    </location>
</feature>
<accession>A4Y190</accession>
<dbReference type="EMBL" id="CP000680">
    <property type="protein sequence ID" value="ABP87356.1"/>
    <property type="molecule type" value="Genomic_DNA"/>
</dbReference>
<dbReference type="SMR" id="A4Y190"/>
<dbReference type="STRING" id="399739.Pmen_4610"/>
<dbReference type="KEGG" id="pmy:Pmen_4610"/>
<dbReference type="eggNOG" id="COG0712">
    <property type="taxonomic scope" value="Bacteria"/>
</dbReference>
<dbReference type="HOGENOM" id="CLU_085114_3_0_6"/>
<dbReference type="OrthoDB" id="9816221at2"/>
<dbReference type="GO" id="GO:0005886">
    <property type="term" value="C:plasma membrane"/>
    <property type="evidence" value="ECO:0007669"/>
    <property type="project" value="UniProtKB-SubCell"/>
</dbReference>
<dbReference type="GO" id="GO:0045259">
    <property type="term" value="C:proton-transporting ATP synthase complex"/>
    <property type="evidence" value="ECO:0007669"/>
    <property type="project" value="UniProtKB-KW"/>
</dbReference>
<dbReference type="GO" id="GO:0046933">
    <property type="term" value="F:proton-transporting ATP synthase activity, rotational mechanism"/>
    <property type="evidence" value="ECO:0007669"/>
    <property type="project" value="UniProtKB-UniRule"/>
</dbReference>
<dbReference type="Gene3D" id="1.10.520.20">
    <property type="entry name" value="N-terminal domain of the delta subunit of the F1F0-ATP synthase"/>
    <property type="match status" value="1"/>
</dbReference>
<dbReference type="HAMAP" id="MF_01416">
    <property type="entry name" value="ATP_synth_delta_bact"/>
    <property type="match status" value="1"/>
</dbReference>
<dbReference type="InterPro" id="IPR026015">
    <property type="entry name" value="ATP_synth_OSCP/delta_N_sf"/>
</dbReference>
<dbReference type="InterPro" id="IPR000711">
    <property type="entry name" value="ATPase_OSCP/dsu"/>
</dbReference>
<dbReference type="NCBIfam" id="TIGR01145">
    <property type="entry name" value="ATP_synt_delta"/>
    <property type="match status" value="1"/>
</dbReference>
<dbReference type="NCBIfam" id="NF004402">
    <property type="entry name" value="PRK05758.2-2"/>
    <property type="match status" value="1"/>
</dbReference>
<dbReference type="PANTHER" id="PTHR11910">
    <property type="entry name" value="ATP SYNTHASE DELTA CHAIN"/>
    <property type="match status" value="1"/>
</dbReference>
<dbReference type="Pfam" id="PF00213">
    <property type="entry name" value="OSCP"/>
    <property type="match status" value="1"/>
</dbReference>
<dbReference type="PRINTS" id="PR00125">
    <property type="entry name" value="ATPASEDELTA"/>
</dbReference>
<dbReference type="SUPFAM" id="SSF47928">
    <property type="entry name" value="N-terminal domain of the delta subunit of the F1F0-ATP synthase"/>
    <property type="match status" value="1"/>
</dbReference>
<organism>
    <name type="scientific">Ectopseudomonas mendocina (strain ymp)</name>
    <name type="common">Pseudomonas mendocina</name>
    <dbReference type="NCBI Taxonomy" id="399739"/>
    <lineage>
        <taxon>Bacteria</taxon>
        <taxon>Pseudomonadati</taxon>
        <taxon>Pseudomonadota</taxon>
        <taxon>Gammaproteobacteria</taxon>
        <taxon>Pseudomonadales</taxon>
        <taxon>Pseudomonadaceae</taxon>
        <taxon>Ectopseudomonas</taxon>
    </lineage>
</organism>
<gene>
    <name evidence="1" type="primary">atpH</name>
    <name type="ordered locus">Pmen_4610</name>
</gene>
<proteinExistence type="inferred from homology"/>
<name>ATPD_ECTM1</name>
<reference key="1">
    <citation type="submission" date="2007-04" db="EMBL/GenBank/DDBJ databases">
        <title>Complete sequence of Pseudomonas mendocina ymp.</title>
        <authorList>
            <consortium name="US DOE Joint Genome Institute"/>
            <person name="Copeland A."/>
            <person name="Lucas S."/>
            <person name="Lapidus A."/>
            <person name="Barry K."/>
            <person name="Glavina del Rio T."/>
            <person name="Dalin E."/>
            <person name="Tice H."/>
            <person name="Pitluck S."/>
            <person name="Kiss H."/>
            <person name="Brettin T."/>
            <person name="Detter J.C."/>
            <person name="Bruce D."/>
            <person name="Han C."/>
            <person name="Schmutz J."/>
            <person name="Larimer F."/>
            <person name="Land M."/>
            <person name="Hauser L."/>
            <person name="Kyrpides N."/>
            <person name="Mikhailova N."/>
            <person name="Hersman L."/>
            <person name="Dubois J."/>
            <person name="Maurice P."/>
            <person name="Richardson P."/>
        </authorList>
    </citation>
    <scope>NUCLEOTIDE SEQUENCE [LARGE SCALE GENOMIC DNA]</scope>
    <source>
        <strain>ymp</strain>
    </source>
</reference>
<keyword id="KW-0066">ATP synthesis</keyword>
<keyword id="KW-0997">Cell inner membrane</keyword>
<keyword id="KW-1003">Cell membrane</keyword>
<keyword id="KW-0139">CF(1)</keyword>
<keyword id="KW-0375">Hydrogen ion transport</keyword>
<keyword id="KW-0406">Ion transport</keyword>
<keyword id="KW-0472">Membrane</keyword>
<keyword id="KW-0813">Transport</keyword>
<comment type="function">
    <text evidence="1">F(1)F(0) ATP synthase produces ATP from ADP in the presence of a proton or sodium gradient. F-type ATPases consist of two structural domains, F(1) containing the extramembraneous catalytic core and F(0) containing the membrane proton channel, linked together by a central stalk and a peripheral stalk. During catalysis, ATP synthesis in the catalytic domain of F(1) is coupled via a rotary mechanism of the central stalk subunits to proton translocation.</text>
</comment>
<comment type="function">
    <text evidence="1">This protein is part of the stalk that links CF(0) to CF(1). It either transmits conformational changes from CF(0) to CF(1) or is implicated in proton conduction.</text>
</comment>
<comment type="subunit">
    <text evidence="1">F-type ATPases have 2 components, F(1) - the catalytic core - and F(0) - the membrane proton channel. F(1) has five subunits: alpha(3), beta(3), gamma(1), delta(1), epsilon(1). F(0) has three main subunits: a(1), b(2) and c(10-14). The alpha and beta chains form an alternating ring which encloses part of the gamma chain. F(1) is attached to F(0) by a central stalk formed by the gamma and epsilon chains, while a peripheral stalk is formed by the delta and b chains.</text>
</comment>
<comment type="subcellular location">
    <subcellularLocation>
        <location evidence="1">Cell inner membrane</location>
        <topology evidence="1">Peripheral membrane protein</topology>
    </subcellularLocation>
</comment>
<comment type="similarity">
    <text evidence="1">Belongs to the ATPase delta chain family.</text>
</comment>
<protein>
    <recommendedName>
        <fullName evidence="1">ATP synthase subunit delta</fullName>
    </recommendedName>
    <alternativeName>
        <fullName evidence="1">ATP synthase F(1) sector subunit delta</fullName>
    </alternativeName>
    <alternativeName>
        <fullName evidence="1">F-type ATPase subunit delta</fullName>
        <shortName evidence="1">F-ATPase subunit delta</shortName>
    </alternativeName>
</protein>